<gene>
    <name evidence="1" type="primary">ppnP</name>
    <name type="ordered locus">HEAR0870</name>
</gene>
<keyword id="KW-0328">Glycosyltransferase</keyword>
<keyword id="KW-1185">Reference proteome</keyword>
<keyword id="KW-0808">Transferase</keyword>
<proteinExistence type="inferred from homology"/>
<name>PPNP_HERAR</name>
<sequence length="104" mass="11492">MTTQFDNVSVVKKANIYFDGKCVSHTVLFADGTKKTIGIIFPSTLKFNTGAAEIMELNAGKCRIRLAGATEWNTYEGGQQFEVPANSSFDIETVDTLDYVCHFI</sequence>
<protein>
    <recommendedName>
        <fullName evidence="1">Pyrimidine/purine nucleoside phosphorylase</fullName>
        <ecNumber evidence="1">2.4.2.1</ecNumber>
        <ecNumber evidence="1">2.4.2.2</ecNumber>
    </recommendedName>
    <alternativeName>
        <fullName evidence="1">Adenosine phosphorylase</fullName>
    </alternativeName>
    <alternativeName>
        <fullName evidence="1">Cytidine phosphorylase</fullName>
    </alternativeName>
    <alternativeName>
        <fullName evidence="1">Guanosine phosphorylase</fullName>
    </alternativeName>
    <alternativeName>
        <fullName evidence="1">Inosine phosphorylase</fullName>
    </alternativeName>
    <alternativeName>
        <fullName evidence="1">Thymidine phosphorylase</fullName>
    </alternativeName>
    <alternativeName>
        <fullName evidence="1">Uridine phosphorylase</fullName>
    </alternativeName>
    <alternativeName>
        <fullName evidence="1">Xanthosine phosphorylase</fullName>
    </alternativeName>
</protein>
<evidence type="ECO:0000255" key="1">
    <source>
        <dbReference type="HAMAP-Rule" id="MF_01537"/>
    </source>
</evidence>
<organism>
    <name type="scientific">Herminiimonas arsenicoxydans</name>
    <dbReference type="NCBI Taxonomy" id="204773"/>
    <lineage>
        <taxon>Bacteria</taxon>
        <taxon>Pseudomonadati</taxon>
        <taxon>Pseudomonadota</taxon>
        <taxon>Betaproteobacteria</taxon>
        <taxon>Burkholderiales</taxon>
        <taxon>Oxalobacteraceae</taxon>
        <taxon>Herminiimonas</taxon>
    </lineage>
</organism>
<accession>A4G3H0</accession>
<dbReference type="EC" id="2.4.2.1" evidence="1"/>
<dbReference type="EC" id="2.4.2.2" evidence="1"/>
<dbReference type="EMBL" id="CU207211">
    <property type="protein sequence ID" value="CAL61057.1"/>
    <property type="molecule type" value="Genomic_DNA"/>
</dbReference>
<dbReference type="SMR" id="A4G3H0"/>
<dbReference type="STRING" id="204773.HEAR0870"/>
<dbReference type="KEGG" id="har:HEAR0870"/>
<dbReference type="eggNOG" id="COG3123">
    <property type="taxonomic scope" value="Bacteria"/>
</dbReference>
<dbReference type="HOGENOM" id="CLU_157874_1_0_4"/>
<dbReference type="OrthoDB" id="9793848at2"/>
<dbReference type="Proteomes" id="UP000006697">
    <property type="component" value="Chromosome"/>
</dbReference>
<dbReference type="GO" id="GO:0005829">
    <property type="term" value="C:cytosol"/>
    <property type="evidence" value="ECO:0007669"/>
    <property type="project" value="TreeGrafter"/>
</dbReference>
<dbReference type="GO" id="GO:0047975">
    <property type="term" value="F:guanosine phosphorylase activity"/>
    <property type="evidence" value="ECO:0007669"/>
    <property type="project" value="UniProtKB-EC"/>
</dbReference>
<dbReference type="GO" id="GO:0004731">
    <property type="term" value="F:purine-nucleoside phosphorylase activity"/>
    <property type="evidence" value="ECO:0007669"/>
    <property type="project" value="UniProtKB-UniRule"/>
</dbReference>
<dbReference type="GO" id="GO:0009032">
    <property type="term" value="F:thymidine phosphorylase activity"/>
    <property type="evidence" value="ECO:0007669"/>
    <property type="project" value="UniProtKB-EC"/>
</dbReference>
<dbReference type="GO" id="GO:0004850">
    <property type="term" value="F:uridine phosphorylase activity"/>
    <property type="evidence" value="ECO:0007669"/>
    <property type="project" value="UniProtKB-EC"/>
</dbReference>
<dbReference type="CDD" id="cd20296">
    <property type="entry name" value="cupin_PpnP-like"/>
    <property type="match status" value="1"/>
</dbReference>
<dbReference type="Gene3D" id="2.60.120.10">
    <property type="entry name" value="Jelly Rolls"/>
    <property type="match status" value="1"/>
</dbReference>
<dbReference type="HAMAP" id="MF_01537">
    <property type="entry name" value="Nucleos_phosphorylase_PpnP"/>
    <property type="match status" value="1"/>
</dbReference>
<dbReference type="InterPro" id="IPR009664">
    <property type="entry name" value="Ppnp"/>
</dbReference>
<dbReference type="InterPro" id="IPR014710">
    <property type="entry name" value="RmlC-like_jellyroll"/>
</dbReference>
<dbReference type="InterPro" id="IPR011051">
    <property type="entry name" value="RmlC_Cupin_sf"/>
</dbReference>
<dbReference type="PANTHER" id="PTHR36540">
    <property type="entry name" value="PYRIMIDINE/PURINE NUCLEOSIDE PHOSPHORYLASE"/>
    <property type="match status" value="1"/>
</dbReference>
<dbReference type="PANTHER" id="PTHR36540:SF1">
    <property type="entry name" value="PYRIMIDINE_PURINE NUCLEOSIDE PHOSPHORYLASE"/>
    <property type="match status" value="1"/>
</dbReference>
<dbReference type="Pfam" id="PF06865">
    <property type="entry name" value="Ppnp"/>
    <property type="match status" value="1"/>
</dbReference>
<dbReference type="SUPFAM" id="SSF51182">
    <property type="entry name" value="RmlC-like cupins"/>
    <property type="match status" value="1"/>
</dbReference>
<reference key="1">
    <citation type="journal article" date="2007" name="PLoS Genet.">
        <title>A tale of two oxidation states: bacterial colonization of arsenic-rich environments.</title>
        <authorList>
            <person name="Muller D."/>
            <person name="Medigue C."/>
            <person name="Koechler S."/>
            <person name="Barbe V."/>
            <person name="Barakat M."/>
            <person name="Talla E."/>
            <person name="Bonnefoy V."/>
            <person name="Krin E."/>
            <person name="Arsene-Ploetze F."/>
            <person name="Carapito C."/>
            <person name="Chandler M."/>
            <person name="Cournoyer B."/>
            <person name="Cruveiller S."/>
            <person name="Dossat C."/>
            <person name="Duval S."/>
            <person name="Heymann M."/>
            <person name="Leize E."/>
            <person name="Lieutaud A."/>
            <person name="Lievremont D."/>
            <person name="Makita Y."/>
            <person name="Mangenot S."/>
            <person name="Nitschke W."/>
            <person name="Ortet P."/>
            <person name="Perdrial N."/>
            <person name="Schoepp B."/>
            <person name="Siguier P."/>
            <person name="Simeonova D.D."/>
            <person name="Rouy Z."/>
            <person name="Segurens B."/>
            <person name="Turlin E."/>
            <person name="Vallenet D."/>
            <person name="van Dorsselaer A."/>
            <person name="Weiss S."/>
            <person name="Weissenbach J."/>
            <person name="Lett M.-C."/>
            <person name="Danchin A."/>
            <person name="Bertin P.N."/>
        </authorList>
    </citation>
    <scope>NUCLEOTIDE SEQUENCE [LARGE SCALE GENOMIC DNA]</scope>
    <source>
        <strain>ULPAs1</strain>
    </source>
</reference>
<comment type="function">
    <text evidence="1">Catalyzes the phosphorolysis of diverse nucleosides, yielding D-ribose 1-phosphate and the respective free bases. Can use uridine, adenosine, guanosine, cytidine, thymidine, inosine and xanthosine as substrates. Also catalyzes the reverse reactions.</text>
</comment>
<comment type="catalytic activity">
    <reaction evidence="1">
        <text>a purine D-ribonucleoside + phosphate = a purine nucleobase + alpha-D-ribose 1-phosphate</text>
        <dbReference type="Rhea" id="RHEA:19805"/>
        <dbReference type="ChEBI" id="CHEBI:26386"/>
        <dbReference type="ChEBI" id="CHEBI:43474"/>
        <dbReference type="ChEBI" id="CHEBI:57720"/>
        <dbReference type="ChEBI" id="CHEBI:142355"/>
        <dbReference type="EC" id="2.4.2.1"/>
    </reaction>
</comment>
<comment type="catalytic activity">
    <reaction evidence="1">
        <text>adenosine + phosphate = alpha-D-ribose 1-phosphate + adenine</text>
        <dbReference type="Rhea" id="RHEA:27642"/>
        <dbReference type="ChEBI" id="CHEBI:16335"/>
        <dbReference type="ChEBI" id="CHEBI:16708"/>
        <dbReference type="ChEBI" id="CHEBI:43474"/>
        <dbReference type="ChEBI" id="CHEBI:57720"/>
        <dbReference type="EC" id="2.4.2.1"/>
    </reaction>
</comment>
<comment type="catalytic activity">
    <reaction evidence="1">
        <text>cytidine + phosphate = cytosine + alpha-D-ribose 1-phosphate</text>
        <dbReference type="Rhea" id="RHEA:52540"/>
        <dbReference type="ChEBI" id="CHEBI:16040"/>
        <dbReference type="ChEBI" id="CHEBI:17562"/>
        <dbReference type="ChEBI" id="CHEBI:43474"/>
        <dbReference type="ChEBI" id="CHEBI:57720"/>
        <dbReference type="EC" id="2.4.2.2"/>
    </reaction>
</comment>
<comment type="catalytic activity">
    <reaction evidence="1">
        <text>guanosine + phosphate = alpha-D-ribose 1-phosphate + guanine</text>
        <dbReference type="Rhea" id="RHEA:13233"/>
        <dbReference type="ChEBI" id="CHEBI:16235"/>
        <dbReference type="ChEBI" id="CHEBI:16750"/>
        <dbReference type="ChEBI" id="CHEBI:43474"/>
        <dbReference type="ChEBI" id="CHEBI:57720"/>
        <dbReference type="EC" id="2.4.2.1"/>
    </reaction>
</comment>
<comment type="catalytic activity">
    <reaction evidence="1">
        <text>inosine + phosphate = alpha-D-ribose 1-phosphate + hypoxanthine</text>
        <dbReference type="Rhea" id="RHEA:27646"/>
        <dbReference type="ChEBI" id="CHEBI:17368"/>
        <dbReference type="ChEBI" id="CHEBI:17596"/>
        <dbReference type="ChEBI" id="CHEBI:43474"/>
        <dbReference type="ChEBI" id="CHEBI:57720"/>
        <dbReference type="EC" id="2.4.2.1"/>
    </reaction>
</comment>
<comment type="catalytic activity">
    <reaction evidence="1">
        <text>thymidine + phosphate = 2-deoxy-alpha-D-ribose 1-phosphate + thymine</text>
        <dbReference type="Rhea" id="RHEA:16037"/>
        <dbReference type="ChEBI" id="CHEBI:17748"/>
        <dbReference type="ChEBI" id="CHEBI:17821"/>
        <dbReference type="ChEBI" id="CHEBI:43474"/>
        <dbReference type="ChEBI" id="CHEBI:57259"/>
        <dbReference type="EC" id="2.4.2.2"/>
    </reaction>
</comment>
<comment type="catalytic activity">
    <reaction evidence="1">
        <text>uridine + phosphate = alpha-D-ribose 1-phosphate + uracil</text>
        <dbReference type="Rhea" id="RHEA:24388"/>
        <dbReference type="ChEBI" id="CHEBI:16704"/>
        <dbReference type="ChEBI" id="CHEBI:17568"/>
        <dbReference type="ChEBI" id="CHEBI:43474"/>
        <dbReference type="ChEBI" id="CHEBI:57720"/>
        <dbReference type="EC" id="2.4.2.2"/>
    </reaction>
</comment>
<comment type="catalytic activity">
    <reaction evidence="1">
        <text>xanthosine + phosphate = alpha-D-ribose 1-phosphate + xanthine</text>
        <dbReference type="Rhea" id="RHEA:27638"/>
        <dbReference type="ChEBI" id="CHEBI:17712"/>
        <dbReference type="ChEBI" id="CHEBI:18107"/>
        <dbReference type="ChEBI" id="CHEBI:43474"/>
        <dbReference type="ChEBI" id="CHEBI:57720"/>
        <dbReference type="EC" id="2.4.2.1"/>
    </reaction>
</comment>
<comment type="similarity">
    <text evidence="1">Belongs to the nucleoside phosphorylase PpnP family.</text>
</comment>
<feature type="chain" id="PRO_0000298697" description="Pyrimidine/purine nucleoside phosphorylase">
    <location>
        <begin position="1"/>
        <end position="104"/>
    </location>
</feature>